<proteinExistence type="inferred from homology"/>
<dbReference type="GO" id="GO:0005576">
    <property type="term" value="C:extracellular region"/>
    <property type="evidence" value="ECO:0007669"/>
    <property type="project" value="UniProtKB-SubCell"/>
</dbReference>
<dbReference type="GO" id="GO:0042742">
    <property type="term" value="P:defense response to bacterium"/>
    <property type="evidence" value="ECO:0007669"/>
    <property type="project" value="UniProtKB-KW"/>
</dbReference>
<dbReference type="GO" id="GO:0050832">
    <property type="term" value="P:defense response to fungus"/>
    <property type="evidence" value="ECO:0007669"/>
    <property type="project" value="UniProtKB-KW"/>
</dbReference>
<dbReference type="GO" id="GO:0045087">
    <property type="term" value="P:innate immune response"/>
    <property type="evidence" value="ECO:0007669"/>
    <property type="project" value="UniProtKB-KW"/>
</dbReference>
<dbReference type="GO" id="GO:0031640">
    <property type="term" value="P:killing of cells of another organism"/>
    <property type="evidence" value="ECO:0007669"/>
    <property type="project" value="UniProtKB-KW"/>
</dbReference>
<evidence type="ECO:0000255" key="1"/>
<evidence type="ECO:0000269" key="2">
    <source>
    </source>
</evidence>
<evidence type="ECO:0000303" key="3">
    <source>
    </source>
</evidence>
<evidence type="ECO:0000305" key="4"/>
<evidence type="ECO:0000305" key="5">
    <source>
    </source>
</evidence>
<organism>
    <name type="scientific">Vespa tropica</name>
    <name type="common">Greater banded hornet</name>
    <name type="synonym">Sphex tropica</name>
    <dbReference type="NCBI Taxonomy" id="7450"/>
    <lineage>
        <taxon>Eukaryota</taxon>
        <taxon>Metazoa</taxon>
        <taxon>Ecdysozoa</taxon>
        <taxon>Arthropoda</taxon>
        <taxon>Hexapoda</taxon>
        <taxon>Insecta</taxon>
        <taxon>Pterygota</taxon>
        <taxon>Neoptera</taxon>
        <taxon>Endopterygota</taxon>
        <taxon>Hymenoptera</taxon>
        <taxon>Apocrita</taxon>
        <taxon>Aculeata</taxon>
        <taxon>Vespoidea</taxon>
        <taxon>Vespidae</taxon>
        <taxon>Vespinae</taxon>
        <taxon>Vespa</taxon>
    </lineage>
</organism>
<keyword id="KW-0044">Antibiotic</keyword>
<keyword id="KW-0929">Antimicrobial</keyword>
<keyword id="KW-0295">Fungicide</keyword>
<keyword id="KW-0391">Immunity</keyword>
<keyword id="KW-0399">Innate immunity</keyword>
<keyword id="KW-0677">Repeat</keyword>
<keyword id="KW-0964">Secreted</keyword>
<keyword id="KW-0732">Signal</keyword>
<reference key="1">
    <citation type="journal article" date="2013" name="Toxicon">
        <title>Antimicrobial peptides from the venom gland of the social wasp Vespa tropica.</title>
        <authorList>
            <person name="Yang X."/>
            <person name="Wang Y."/>
            <person name="Lee W.H."/>
            <person name="Zhang Y."/>
        </authorList>
    </citation>
    <scope>NUCLEOTIDE SEQUENCE [MRNA]</scope>
    <scope>FUNCTION</scope>
    <scope>SYNTHESIS OF 46-59</scope>
    <source>
        <tissue>Venom gland</tissue>
    </source>
</reference>
<protein>
    <recommendedName>
        <fullName evidence="3">Mastoparan-VT5</fullName>
    </recommendedName>
</protein>
<accession>P0DQZ7</accession>
<name>MAST5_VESTR</name>
<feature type="signal peptide" evidence="1">
    <location>
        <begin position="1"/>
        <end position="27"/>
    </location>
</feature>
<feature type="propeptide" id="PRO_0000458791" evidence="5">
    <location>
        <begin position="28"/>
        <end position="45"/>
    </location>
</feature>
<feature type="peptide" id="PRO_0000458792" description="Mastoparan-VT5" evidence="2">
    <location>
        <begin position="46"/>
        <end position="59"/>
    </location>
</feature>
<feature type="repeat" description="AXPX 1" evidence="4">
    <location>
        <begin position="27"/>
        <end position="30"/>
    </location>
</feature>
<feature type="repeat" description="AXPX 2" evidence="4">
    <location>
        <begin position="31"/>
        <end position="34"/>
    </location>
</feature>
<feature type="repeat" description="AXPX 3" evidence="4">
    <location>
        <begin position="37"/>
        <end position="40"/>
    </location>
</feature>
<feature type="repeat" description="AXPX 4" evidence="4">
    <location>
        <begin position="41"/>
        <end position="44"/>
    </location>
</feature>
<sequence length="60" mass="6438">MKNTILILFTAFIALLGFFGMIAEPLADPLADPLPDADPDADPETVIVKAIATLSKKLLR</sequence>
<comment type="function">
    <text evidence="2">The synthetic peptide shows weak antimicrobial activities against a few Gram-positive bacteria (only 2 on the 11 strains tested) and the fungus C.albicans. Does not show activity against all the Gram-negative bacteria tested. Exhibits little hemolytic activity against washed human erythrocytes.</text>
</comment>
<comment type="subcellular location">
    <subcellularLocation>
        <location evidence="5">Secreted</location>
    </subcellularLocation>
</comment>
<comment type="tissue specificity">
    <text evidence="5">Expressed by the venom gland.</text>
</comment>
<comment type="similarity">
    <text evidence="4">Belongs to the MCD family. Mastoparan subfamily.</text>
</comment>